<accession>Q7NZD3</accession>
<proteinExistence type="inferred from homology"/>
<organism>
    <name type="scientific">Chromobacterium violaceum (strain ATCC 12472 / DSM 30191 / JCM 1249 / CCUG 213 / NBRC 12614 / NCIMB 9131 / NCTC 9757 / MK)</name>
    <dbReference type="NCBI Taxonomy" id="243365"/>
    <lineage>
        <taxon>Bacteria</taxon>
        <taxon>Pseudomonadati</taxon>
        <taxon>Pseudomonadota</taxon>
        <taxon>Betaproteobacteria</taxon>
        <taxon>Neisseriales</taxon>
        <taxon>Chromobacteriaceae</taxon>
        <taxon>Chromobacterium</taxon>
    </lineage>
</organism>
<reference key="1">
    <citation type="journal article" date="2003" name="Proc. Natl. Acad. Sci. U.S.A.">
        <title>The complete genome sequence of Chromobacterium violaceum reveals remarkable and exploitable bacterial adaptability.</title>
        <authorList>
            <person name="Vasconcelos A.T.R."/>
            <person name="de Almeida D.F."/>
            <person name="Hungria M."/>
            <person name="Guimaraes C.T."/>
            <person name="Antonio R.V."/>
            <person name="Almeida F.C."/>
            <person name="de Almeida L.G.P."/>
            <person name="de Almeida R."/>
            <person name="Alves-Gomes J.A."/>
            <person name="Andrade E.M."/>
            <person name="Araripe J."/>
            <person name="de Araujo M.F.F."/>
            <person name="Astolfi-Filho S."/>
            <person name="Azevedo V."/>
            <person name="Baptista A.J."/>
            <person name="Bataus L.A.M."/>
            <person name="Batista J.S."/>
            <person name="Belo A."/>
            <person name="van den Berg C."/>
            <person name="Bogo M."/>
            <person name="Bonatto S."/>
            <person name="Bordignon J."/>
            <person name="Brigido M.M."/>
            <person name="Brito C.A."/>
            <person name="Brocchi M."/>
            <person name="Burity H.A."/>
            <person name="Camargo A.A."/>
            <person name="Cardoso D.D.P."/>
            <person name="Carneiro N.P."/>
            <person name="Carraro D.M."/>
            <person name="Carvalho C.M.B."/>
            <person name="Cascardo J.C.M."/>
            <person name="Cavada B.S."/>
            <person name="Chueire L.M.O."/>
            <person name="Creczynski-Pasa T.B."/>
            <person name="Cunha-Junior N.C."/>
            <person name="Fagundes N."/>
            <person name="Falcao C.L."/>
            <person name="Fantinatti F."/>
            <person name="Farias I.P."/>
            <person name="Felipe M.S.S."/>
            <person name="Ferrari L.P."/>
            <person name="Ferro J.A."/>
            <person name="Ferro M.I.T."/>
            <person name="Franco G.R."/>
            <person name="Freitas N.S.A."/>
            <person name="Furlan L.R."/>
            <person name="Gazzinelli R.T."/>
            <person name="Gomes E.A."/>
            <person name="Goncalves P.R."/>
            <person name="Grangeiro T.B."/>
            <person name="Grattapaglia D."/>
            <person name="Grisard E.C."/>
            <person name="Hanna E.S."/>
            <person name="Jardim S.N."/>
            <person name="Laurino J."/>
            <person name="Leoi L.C.T."/>
            <person name="Lima L.F.A."/>
            <person name="Loureiro M.F."/>
            <person name="Lyra M.C.C.P."/>
            <person name="Madeira H.M.F."/>
            <person name="Manfio G.P."/>
            <person name="Maranhao A.Q."/>
            <person name="Martins W.S."/>
            <person name="di Mauro S.M.Z."/>
            <person name="de Medeiros S.R.B."/>
            <person name="Meissner R.V."/>
            <person name="Moreira M.A.M."/>
            <person name="Nascimento F.F."/>
            <person name="Nicolas M.F."/>
            <person name="Oliveira J.G."/>
            <person name="Oliveira S.C."/>
            <person name="Paixao R.F.C."/>
            <person name="Parente J.A."/>
            <person name="Pedrosa F.O."/>
            <person name="Pena S.D.J."/>
            <person name="Pereira J.O."/>
            <person name="Pereira M."/>
            <person name="Pinto L.S.R.C."/>
            <person name="Pinto L.S."/>
            <person name="Porto J.I.R."/>
            <person name="Potrich D.P."/>
            <person name="Ramalho-Neto C.E."/>
            <person name="Reis A.M.M."/>
            <person name="Rigo L.U."/>
            <person name="Rondinelli E."/>
            <person name="Santos E.B.P."/>
            <person name="Santos F.R."/>
            <person name="Schneider M.P.C."/>
            <person name="Seuanez H.N."/>
            <person name="Silva A.M.R."/>
            <person name="da Silva A.L.C."/>
            <person name="Silva D.W."/>
            <person name="Silva R."/>
            <person name="Simoes I.C."/>
            <person name="Simon D."/>
            <person name="Soares C.M.A."/>
            <person name="Soares R.B.A."/>
            <person name="Souza E.M."/>
            <person name="Souza K.R.L."/>
            <person name="Souza R.C."/>
            <person name="Steffens M.B.R."/>
            <person name="Steindel M."/>
            <person name="Teixeira S.R."/>
            <person name="Urmenyi T."/>
            <person name="Vettore A."/>
            <person name="Wassem R."/>
            <person name="Zaha A."/>
            <person name="Simpson A.J.G."/>
        </authorList>
    </citation>
    <scope>NUCLEOTIDE SEQUENCE [LARGE SCALE GENOMIC DNA]</scope>
    <source>
        <strain>ATCC 12472 / DSM 30191 / JCM 1249 / CCUG 213 / NBRC 12614 / NCIMB 9131 / NCTC 9757 / MK</strain>
    </source>
</reference>
<dbReference type="EC" id="2.1.1.163" evidence="1"/>
<dbReference type="EC" id="2.1.1.201" evidence="1"/>
<dbReference type="EMBL" id="AE016825">
    <property type="protein sequence ID" value="AAQ58663.1"/>
    <property type="status" value="ALT_INIT"/>
    <property type="molecule type" value="Genomic_DNA"/>
</dbReference>
<dbReference type="RefSeq" id="WP_043595534.1">
    <property type="nucleotide sequence ID" value="NC_005085.1"/>
</dbReference>
<dbReference type="SMR" id="Q7NZD3"/>
<dbReference type="STRING" id="243365.CV_0989"/>
<dbReference type="KEGG" id="cvi:CV_0989"/>
<dbReference type="eggNOG" id="COG2226">
    <property type="taxonomic scope" value="Bacteria"/>
</dbReference>
<dbReference type="HOGENOM" id="CLU_037990_0_0_4"/>
<dbReference type="OrthoDB" id="9808140at2"/>
<dbReference type="UniPathway" id="UPA00079">
    <property type="reaction ID" value="UER00169"/>
</dbReference>
<dbReference type="UniPathway" id="UPA00232"/>
<dbReference type="Proteomes" id="UP000001424">
    <property type="component" value="Chromosome"/>
</dbReference>
<dbReference type="GO" id="GO:0008425">
    <property type="term" value="F:2-methoxy-6-polyprenyl-1,4-benzoquinol methyltransferase activity"/>
    <property type="evidence" value="ECO:0007669"/>
    <property type="project" value="UniProtKB-UniRule"/>
</dbReference>
<dbReference type="GO" id="GO:0043770">
    <property type="term" value="F:demethylmenaquinone methyltransferase activity"/>
    <property type="evidence" value="ECO:0007669"/>
    <property type="project" value="UniProtKB-UniRule"/>
</dbReference>
<dbReference type="GO" id="GO:0009060">
    <property type="term" value="P:aerobic respiration"/>
    <property type="evidence" value="ECO:0007669"/>
    <property type="project" value="UniProtKB-UniRule"/>
</dbReference>
<dbReference type="GO" id="GO:0009234">
    <property type="term" value="P:menaquinone biosynthetic process"/>
    <property type="evidence" value="ECO:0007669"/>
    <property type="project" value="UniProtKB-UniRule"/>
</dbReference>
<dbReference type="GO" id="GO:0032259">
    <property type="term" value="P:methylation"/>
    <property type="evidence" value="ECO:0007669"/>
    <property type="project" value="UniProtKB-KW"/>
</dbReference>
<dbReference type="CDD" id="cd02440">
    <property type="entry name" value="AdoMet_MTases"/>
    <property type="match status" value="1"/>
</dbReference>
<dbReference type="Gene3D" id="3.40.50.150">
    <property type="entry name" value="Vaccinia Virus protein VP39"/>
    <property type="match status" value="1"/>
</dbReference>
<dbReference type="HAMAP" id="MF_01813">
    <property type="entry name" value="MenG_UbiE_methyltr"/>
    <property type="match status" value="1"/>
</dbReference>
<dbReference type="InterPro" id="IPR029063">
    <property type="entry name" value="SAM-dependent_MTases_sf"/>
</dbReference>
<dbReference type="InterPro" id="IPR004033">
    <property type="entry name" value="UbiE/COQ5_MeTrFase"/>
</dbReference>
<dbReference type="InterPro" id="IPR023576">
    <property type="entry name" value="UbiE/COQ5_MeTrFase_CS"/>
</dbReference>
<dbReference type="NCBIfam" id="TIGR01934">
    <property type="entry name" value="MenG_MenH_UbiE"/>
    <property type="match status" value="1"/>
</dbReference>
<dbReference type="NCBIfam" id="NF001240">
    <property type="entry name" value="PRK00216.1-1"/>
    <property type="match status" value="1"/>
</dbReference>
<dbReference type="NCBIfam" id="NF001244">
    <property type="entry name" value="PRK00216.1-5"/>
    <property type="match status" value="1"/>
</dbReference>
<dbReference type="PANTHER" id="PTHR43591:SF24">
    <property type="entry name" value="2-METHOXY-6-POLYPRENYL-1,4-BENZOQUINOL METHYLASE, MITOCHONDRIAL"/>
    <property type="match status" value="1"/>
</dbReference>
<dbReference type="PANTHER" id="PTHR43591">
    <property type="entry name" value="METHYLTRANSFERASE"/>
    <property type="match status" value="1"/>
</dbReference>
<dbReference type="Pfam" id="PF01209">
    <property type="entry name" value="Ubie_methyltran"/>
    <property type="match status" value="1"/>
</dbReference>
<dbReference type="SUPFAM" id="SSF53335">
    <property type="entry name" value="S-adenosyl-L-methionine-dependent methyltransferases"/>
    <property type="match status" value="1"/>
</dbReference>
<dbReference type="PROSITE" id="PS51608">
    <property type="entry name" value="SAM_MT_UBIE"/>
    <property type="match status" value="1"/>
</dbReference>
<dbReference type="PROSITE" id="PS01183">
    <property type="entry name" value="UBIE_1"/>
    <property type="match status" value="1"/>
</dbReference>
<dbReference type="PROSITE" id="PS01184">
    <property type="entry name" value="UBIE_2"/>
    <property type="match status" value="1"/>
</dbReference>
<feature type="chain" id="PRO_0000193268" description="Ubiquinone/menaquinone biosynthesis C-methyltransferase UbiE">
    <location>
        <begin position="1"/>
        <end position="244"/>
    </location>
</feature>
<feature type="binding site" evidence="1">
    <location>
        <position position="70"/>
    </location>
    <ligand>
        <name>S-adenosyl-L-methionine</name>
        <dbReference type="ChEBI" id="CHEBI:59789"/>
    </ligand>
</feature>
<feature type="binding site" evidence="1">
    <location>
        <position position="91"/>
    </location>
    <ligand>
        <name>S-adenosyl-L-methionine</name>
        <dbReference type="ChEBI" id="CHEBI:59789"/>
    </ligand>
</feature>
<feature type="binding site" evidence="1">
    <location>
        <begin position="117"/>
        <end position="118"/>
    </location>
    <ligand>
        <name>S-adenosyl-L-methionine</name>
        <dbReference type="ChEBI" id="CHEBI:59789"/>
    </ligand>
</feature>
<evidence type="ECO:0000255" key="1">
    <source>
        <dbReference type="HAMAP-Rule" id="MF_01813"/>
    </source>
</evidence>
<evidence type="ECO:0000305" key="2"/>
<protein>
    <recommendedName>
        <fullName evidence="1">Ubiquinone/menaquinone biosynthesis C-methyltransferase UbiE</fullName>
        <ecNumber evidence="1">2.1.1.163</ecNumber>
        <ecNumber evidence="1">2.1.1.201</ecNumber>
    </recommendedName>
    <alternativeName>
        <fullName evidence="1">2-methoxy-6-polyprenyl-1,4-benzoquinol methylase</fullName>
    </alternativeName>
    <alternativeName>
        <fullName evidence="1">Demethylmenaquinone methyltransferase</fullName>
    </alternativeName>
</protein>
<sequence length="244" mass="27001">MDKTTHFGYKTVAESEKAGKVAEVFHSVASKYDVMNDLMSGGLHRVWKHFTLTTSGVRAGDKVLDIAGGTGDLSRGWAKRVGKTGEVWLTDINSSMLTVGRDRLLDEGVILPVSLADAEKLPFPDNYFDAVSVAFGLRNMTHKDAALKEMCRVLKPGGKLFVLEFSKVWKPLSPFYDFYSFKALPIMGKLVANDADSYQYLAESIRMHPDQETLKQMMLDAGFGKVDYHNLTGGVVALHKGVKF</sequence>
<comment type="function">
    <text evidence="1">Methyltransferase required for the conversion of demethylmenaquinol (DMKH2) to menaquinol (MKH2) and the conversion of 2-polyprenyl-6-methoxy-1,4-benzoquinol (DDMQH2) to 2-polyprenyl-3-methyl-6-methoxy-1,4-benzoquinol (DMQH2).</text>
</comment>
<comment type="catalytic activity">
    <reaction evidence="1">
        <text>a 2-demethylmenaquinol + S-adenosyl-L-methionine = a menaquinol + S-adenosyl-L-homocysteine + H(+)</text>
        <dbReference type="Rhea" id="RHEA:42640"/>
        <dbReference type="Rhea" id="RHEA-COMP:9539"/>
        <dbReference type="Rhea" id="RHEA-COMP:9563"/>
        <dbReference type="ChEBI" id="CHEBI:15378"/>
        <dbReference type="ChEBI" id="CHEBI:18151"/>
        <dbReference type="ChEBI" id="CHEBI:55437"/>
        <dbReference type="ChEBI" id="CHEBI:57856"/>
        <dbReference type="ChEBI" id="CHEBI:59789"/>
        <dbReference type="EC" id="2.1.1.163"/>
    </reaction>
</comment>
<comment type="catalytic activity">
    <reaction evidence="1">
        <text>a 2-methoxy-6-(all-trans-polyprenyl)benzene-1,4-diol + S-adenosyl-L-methionine = a 5-methoxy-2-methyl-3-(all-trans-polyprenyl)benzene-1,4-diol + S-adenosyl-L-homocysteine + H(+)</text>
        <dbReference type="Rhea" id="RHEA:28286"/>
        <dbReference type="Rhea" id="RHEA-COMP:10858"/>
        <dbReference type="Rhea" id="RHEA-COMP:10859"/>
        <dbReference type="ChEBI" id="CHEBI:15378"/>
        <dbReference type="ChEBI" id="CHEBI:57856"/>
        <dbReference type="ChEBI" id="CHEBI:59789"/>
        <dbReference type="ChEBI" id="CHEBI:84166"/>
        <dbReference type="ChEBI" id="CHEBI:84167"/>
        <dbReference type="EC" id="2.1.1.201"/>
    </reaction>
</comment>
<comment type="pathway">
    <text evidence="1">Quinol/quinone metabolism; menaquinone biosynthesis; menaquinol from 1,4-dihydroxy-2-naphthoate: step 2/2.</text>
</comment>
<comment type="pathway">
    <text evidence="1">Cofactor biosynthesis; ubiquinone biosynthesis.</text>
</comment>
<comment type="similarity">
    <text evidence="1">Belongs to the class I-like SAM-binding methyltransferase superfamily. MenG/UbiE family.</text>
</comment>
<comment type="sequence caution" evidence="2">
    <conflict type="erroneous initiation">
        <sequence resource="EMBL-CDS" id="AAQ58663"/>
    </conflict>
</comment>
<gene>
    <name evidence="1" type="primary">ubiE</name>
    <name type="ordered locus">CV_0989</name>
</gene>
<name>UBIE_CHRVO</name>
<keyword id="KW-0474">Menaquinone biosynthesis</keyword>
<keyword id="KW-0489">Methyltransferase</keyword>
<keyword id="KW-1185">Reference proteome</keyword>
<keyword id="KW-0949">S-adenosyl-L-methionine</keyword>
<keyword id="KW-0808">Transferase</keyword>
<keyword id="KW-0831">Ubiquinone biosynthesis</keyword>